<keyword id="KW-0413">Isomerase</keyword>
<keyword id="KW-0460">Magnesium</keyword>
<keyword id="KW-0479">Metal-binding</keyword>
<keyword id="KW-0597">Phosphoprotein</keyword>
<keyword id="KW-1185">Reference proteome</keyword>
<comment type="function">
    <text evidence="1">Catalyzes the conversion of glucosamine-6-phosphate to glucosamine-1-phosphate.</text>
</comment>
<comment type="catalytic activity">
    <reaction evidence="1">
        <text>alpha-D-glucosamine 1-phosphate = D-glucosamine 6-phosphate</text>
        <dbReference type="Rhea" id="RHEA:23424"/>
        <dbReference type="ChEBI" id="CHEBI:58516"/>
        <dbReference type="ChEBI" id="CHEBI:58725"/>
        <dbReference type="EC" id="5.4.2.10"/>
    </reaction>
</comment>
<comment type="cofactor">
    <cofactor evidence="1">
        <name>Mg(2+)</name>
        <dbReference type="ChEBI" id="CHEBI:18420"/>
    </cofactor>
    <text evidence="1">Binds 1 Mg(2+) ion per subunit.</text>
</comment>
<comment type="PTM">
    <text evidence="1">Activated by phosphorylation.</text>
</comment>
<comment type="similarity">
    <text evidence="1">Belongs to the phosphohexose mutase family.</text>
</comment>
<evidence type="ECO:0000255" key="1">
    <source>
        <dbReference type="HAMAP-Rule" id="MF_01554"/>
    </source>
</evidence>
<accession>Q2LRC1</accession>
<proteinExistence type="inferred from homology"/>
<sequence length="449" mass="48619">MGKLFGTDGVRGVANEYPMTAEMALNIGRATAFMFKREGHNPKILIGKDTRLSGYMLENALVSGICSMGVNAILVGVIPTPGIAYLTSSMRADAGIVISASHNPFQDNGIKIFSGDGFKLPDETELAIEDMILNNKMDQLLPRVSELGKAYRMDDARGRYIVFLKHTFPRELSLEGVKVVLDCANGATYRVAPETFYELGAEVTTLFDDPDGRNINVNCGSQYPETLAAEVLKQGADVGFAFDGDGDRLIAVDEKGNVLTGDQVIAICANVMKKEGKLTKNLVVRTVMSNIGLSVALEKLDINSIMTKVGDRYVLEEMQANGSSIGGEDSGHVIFLQHHTTGDGIVTAIQVIAAMKKEGKPLSDLAKIMDVFPQTLINVDTKSRPEISTVPELVAVIKSVEEKLGTSGRVLVRYSGTQNMCRVMVEGPTQEETLKYCKQIADVVKEELG</sequence>
<feature type="chain" id="PRO_0000301398" description="Phosphoglucosamine mutase">
    <location>
        <begin position="1"/>
        <end position="449"/>
    </location>
</feature>
<feature type="active site" description="Phosphoserine intermediate" evidence="1">
    <location>
        <position position="101"/>
    </location>
</feature>
<feature type="binding site" description="via phosphate group" evidence="1">
    <location>
        <position position="101"/>
    </location>
    <ligand>
        <name>Mg(2+)</name>
        <dbReference type="ChEBI" id="CHEBI:18420"/>
    </ligand>
</feature>
<feature type="binding site" evidence="1">
    <location>
        <position position="243"/>
    </location>
    <ligand>
        <name>Mg(2+)</name>
        <dbReference type="ChEBI" id="CHEBI:18420"/>
    </ligand>
</feature>
<feature type="binding site" evidence="1">
    <location>
        <position position="245"/>
    </location>
    <ligand>
        <name>Mg(2+)</name>
        <dbReference type="ChEBI" id="CHEBI:18420"/>
    </ligand>
</feature>
<feature type="binding site" evidence="1">
    <location>
        <position position="247"/>
    </location>
    <ligand>
        <name>Mg(2+)</name>
        <dbReference type="ChEBI" id="CHEBI:18420"/>
    </ligand>
</feature>
<feature type="modified residue" description="Phosphoserine" evidence="1">
    <location>
        <position position="101"/>
    </location>
</feature>
<name>GLMM_SYNAS</name>
<gene>
    <name evidence="1" type="primary">glmM</name>
    <name type="ordered locus">SYNAS_07530</name>
    <name type="ORF">SYN_02959</name>
</gene>
<organism>
    <name type="scientific">Syntrophus aciditrophicus (strain SB)</name>
    <dbReference type="NCBI Taxonomy" id="56780"/>
    <lineage>
        <taxon>Bacteria</taxon>
        <taxon>Pseudomonadati</taxon>
        <taxon>Thermodesulfobacteriota</taxon>
        <taxon>Syntrophia</taxon>
        <taxon>Syntrophales</taxon>
        <taxon>Syntrophaceae</taxon>
        <taxon>Syntrophus</taxon>
    </lineage>
</organism>
<reference key="1">
    <citation type="journal article" date="2007" name="Proc. Natl. Acad. Sci. U.S.A.">
        <title>The genome of Syntrophus aciditrophicus: life at the thermodynamic limit of microbial growth.</title>
        <authorList>
            <person name="McInerney M.J."/>
            <person name="Rohlin L."/>
            <person name="Mouttaki H."/>
            <person name="Kim U."/>
            <person name="Krupp R.S."/>
            <person name="Rios-Hernandez L."/>
            <person name="Sieber J."/>
            <person name="Struchtemeyer C.G."/>
            <person name="Bhattacharyya A."/>
            <person name="Campbell J.W."/>
            <person name="Gunsalus R.P."/>
        </authorList>
    </citation>
    <scope>NUCLEOTIDE SEQUENCE [LARGE SCALE GENOMIC DNA]</scope>
    <source>
        <strain>SB</strain>
    </source>
</reference>
<dbReference type="EC" id="5.4.2.10" evidence="1"/>
<dbReference type="EMBL" id="CP000252">
    <property type="protein sequence ID" value="ABC76632.1"/>
    <property type="molecule type" value="Genomic_DNA"/>
</dbReference>
<dbReference type="RefSeq" id="WP_011416666.1">
    <property type="nucleotide sequence ID" value="NC_007759.1"/>
</dbReference>
<dbReference type="SMR" id="Q2LRC1"/>
<dbReference type="FunCoup" id="Q2LRC1">
    <property type="interactions" value="403"/>
</dbReference>
<dbReference type="STRING" id="56780.SYN_02959"/>
<dbReference type="KEGG" id="sat:SYN_02959"/>
<dbReference type="eggNOG" id="COG1109">
    <property type="taxonomic scope" value="Bacteria"/>
</dbReference>
<dbReference type="HOGENOM" id="CLU_016950_7_0_7"/>
<dbReference type="InParanoid" id="Q2LRC1"/>
<dbReference type="OrthoDB" id="9806956at2"/>
<dbReference type="Proteomes" id="UP000001933">
    <property type="component" value="Chromosome"/>
</dbReference>
<dbReference type="GO" id="GO:0005829">
    <property type="term" value="C:cytosol"/>
    <property type="evidence" value="ECO:0007669"/>
    <property type="project" value="TreeGrafter"/>
</dbReference>
<dbReference type="GO" id="GO:0000287">
    <property type="term" value="F:magnesium ion binding"/>
    <property type="evidence" value="ECO:0007669"/>
    <property type="project" value="UniProtKB-UniRule"/>
</dbReference>
<dbReference type="GO" id="GO:0008966">
    <property type="term" value="F:phosphoglucosamine mutase activity"/>
    <property type="evidence" value="ECO:0007669"/>
    <property type="project" value="UniProtKB-UniRule"/>
</dbReference>
<dbReference type="GO" id="GO:0004615">
    <property type="term" value="F:phosphomannomutase activity"/>
    <property type="evidence" value="ECO:0007669"/>
    <property type="project" value="TreeGrafter"/>
</dbReference>
<dbReference type="GO" id="GO:0005975">
    <property type="term" value="P:carbohydrate metabolic process"/>
    <property type="evidence" value="ECO:0007669"/>
    <property type="project" value="InterPro"/>
</dbReference>
<dbReference type="GO" id="GO:0009252">
    <property type="term" value="P:peptidoglycan biosynthetic process"/>
    <property type="evidence" value="ECO:0007669"/>
    <property type="project" value="TreeGrafter"/>
</dbReference>
<dbReference type="GO" id="GO:0006048">
    <property type="term" value="P:UDP-N-acetylglucosamine biosynthetic process"/>
    <property type="evidence" value="ECO:0007669"/>
    <property type="project" value="TreeGrafter"/>
</dbReference>
<dbReference type="CDD" id="cd05802">
    <property type="entry name" value="GlmM"/>
    <property type="match status" value="1"/>
</dbReference>
<dbReference type="FunFam" id="3.30.310.50:FF:000001">
    <property type="entry name" value="Phosphoglucosamine mutase"/>
    <property type="match status" value="1"/>
</dbReference>
<dbReference type="FunFam" id="3.40.120.10:FF:000001">
    <property type="entry name" value="Phosphoglucosamine mutase"/>
    <property type="match status" value="1"/>
</dbReference>
<dbReference type="FunFam" id="3.40.120.10:FF:000003">
    <property type="entry name" value="Phosphoglucosamine mutase"/>
    <property type="match status" value="1"/>
</dbReference>
<dbReference type="Gene3D" id="3.40.120.10">
    <property type="entry name" value="Alpha-D-Glucose-1,6-Bisphosphate, subunit A, domain 3"/>
    <property type="match status" value="3"/>
</dbReference>
<dbReference type="Gene3D" id="3.30.310.50">
    <property type="entry name" value="Alpha-D-phosphohexomutase, C-terminal domain"/>
    <property type="match status" value="1"/>
</dbReference>
<dbReference type="HAMAP" id="MF_01554_B">
    <property type="entry name" value="GlmM_B"/>
    <property type="match status" value="1"/>
</dbReference>
<dbReference type="InterPro" id="IPR005844">
    <property type="entry name" value="A-D-PHexomutase_a/b/a-I"/>
</dbReference>
<dbReference type="InterPro" id="IPR016055">
    <property type="entry name" value="A-D-PHexomutase_a/b/a-I/II/III"/>
</dbReference>
<dbReference type="InterPro" id="IPR005845">
    <property type="entry name" value="A-D-PHexomutase_a/b/a-II"/>
</dbReference>
<dbReference type="InterPro" id="IPR005846">
    <property type="entry name" value="A-D-PHexomutase_a/b/a-III"/>
</dbReference>
<dbReference type="InterPro" id="IPR005843">
    <property type="entry name" value="A-D-PHexomutase_C"/>
</dbReference>
<dbReference type="InterPro" id="IPR036900">
    <property type="entry name" value="A-D-PHexomutase_C_sf"/>
</dbReference>
<dbReference type="InterPro" id="IPR016066">
    <property type="entry name" value="A-D-PHexomutase_CS"/>
</dbReference>
<dbReference type="InterPro" id="IPR005841">
    <property type="entry name" value="Alpha-D-phosphohexomutase_SF"/>
</dbReference>
<dbReference type="InterPro" id="IPR006352">
    <property type="entry name" value="GlmM_bact"/>
</dbReference>
<dbReference type="InterPro" id="IPR050060">
    <property type="entry name" value="Phosphoglucosamine_mutase"/>
</dbReference>
<dbReference type="NCBIfam" id="TIGR01455">
    <property type="entry name" value="glmM"/>
    <property type="match status" value="1"/>
</dbReference>
<dbReference type="NCBIfam" id="NF008139">
    <property type="entry name" value="PRK10887.1"/>
    <property type="match status" value="1"/>
</dbReference>
<dbReference type="PANTHER" id="PTHR42946:SF1">
    <property type="entry name" value="PHOSPHOGLUCOMUTASE (ALPHA-D-GLUCOSE-1,6-BISPHOSPHATE-DEPENDENT)"/>
    <property type="match status" value="1"/>
</dbReference>
<dbReference type="PANTHER" id="PTHR42946">
    <property type="entry name" value="PHOSPHOHEXOSE MUTASE"/>
    <property type="match status" value="1"/>
</dbReference>
<dbReference type="Pfam" id="PF02878">
    <property type="entry name" value="PGM_PMM_I"/>
    <property type="match status" value="1"/>
</dbReference>
<dbReference type="Pfam" id="PF02879">
    <property type="entry name" value="PGM_PMM_II"/>
    <property type="match status" value="1"/>
</dbReference>
<dbReference type="Pfam" id="PF02880">
    <property type="entry name" value="PGM_PMM_III"/>
    <property type="match status" value="1"/>
</dbReference>
<dbReference type="Pfam" id="PF00408">
    <property type="entry name" value="PGM_PMM_IV"/>
    <property type="match status" value="1"/>
</dbReference>
<dbReference type="PRINTS" id="PR00509">
    <property type="entry name" value="PGMPMM"/>
</dbReference>
<dbReference type="SUPFAM" id="SSF55957">
    <property type="entry name" value="Phosphoglucomutase, C-terminal domain"/>
    <property type="match status" value="1"/>
</dbReference>
<dbReference type="SUPFAM" id="SSF53738">
    <property type="entry name" value="Phosphoglucomutase, first 3 domains"/>
    <property type="match status" value="3"/>
</dbReference>
<dbReference type="PROSITE" id="PS00710">
    <property type="entry name" value="PGM_PMM"/>
    <property type="match status" value="1"/>
</dbReference>
<protein>
    <recommendedName>
        <fullName evidence="1">Phosphoglucosamine mutase</fullName>
        <ecNumber evidence="1">5.4.2.10</ecNumber>
    </recommendedName>
</protein>